<evidence type="ECO:0000250" key="1">
    <source>
        <dbReference type="UniProtKB" id="H3JQW0"/>
    </source>
</evidence>
<evidence type="ECO:0000255" key="2"/>
<evidence type="ECO:0000255" key="3">
    <source>
        <dbReference type="PROSITE-ProRule" id="PRU00498"/>
    </source>
</evidence>
<evidence type="ECO:0000269" key="4">
    <source>
    </source>
</evidence>
<evidence type="ECO:0000269" key="5">
    <source>
    </source>
</evidence>
<evidence type="ECO:0000269" key="6">
    <source>
    </source>
</evidence>
<evidence type="ECO:0000303" key="7">
    <source>
    </source>
</evidence>
<evidence type="ECO:0000305" key="8"/>
<comment type="function">
    <text evidence="4 5 6">Non-reducing polyketide synthase; part of the gene cluster that mediates the biosynthesis of the bicoumarin kotanin (PubMed:22945023, PubMed:26389790). The non-reducing polyketide synthase ktnS first catalyzes the formation of the pentaketidic 4,7-dihydroxy-5-methylcoumarin from acetyl coenzyme A and 4 malonyl coenzyme A molecules (PubMed:17315249, PubMed:22945023). Further O-methylation by ktnB leads to the formation of 7-demethylsiderin (PubMed:17315249, PubMed:22945023, PubMed:26389790). Then, an oxidative phenol coupling catalyzed by the cytochrome P450 monooxygenase ktnC forms the 8,8'-dimer P-orlandin via dimerization the monomeric precursor, 7-demethylsiderin (PubMed:26389790). P-orlandin is subsequently O-methylated in a stepwise fashion to demethylkotanin and kotanin (PubMed:22945023). The function of ktnD within the pathway has not been determined yet (PubMed:22945023).</text>
</comment>
<comment type="cofactor">
    <cofactor evidence="1">
        <name>FAD</name>
        <dbReference type="ChEBI" id="CHEBI:57692"/>
    </cofactor>
    <text evidence="1">Binds 1 FAD per subunit.</text>
</comment>
<comment type="subcellular location">
    <subcellularLocation>
        <location evidence="2">Membrane</location>
        <topology evidence="2">Multi-pass membrane protein</topology>
    </subcellularLocation>
</comment>
<comment type="similarity">
    <text evidence="8">Belongs to the FAD-binding monooxygenase family.</text>
</comment>
<protein>
    <recommendedName>
        <fullName evidence="8">FAD-binding monooxygenase ktnD</fullName>
        <ecNumber evidence="8">1.14.13.-</ecNumber>
    </recommendedName>
    <alternativeName>
        <fullName evidence="7">Kotanin biosynthesis cluster protein D</fullName>
    </alternativeName>
</protein>
<organism>
    <name type="scientific">Aspergillus niger (strain ATCC MYA-4892 / CBS 513.88 / FGSC A1513)</name>
    <dbReference type="NCBI Taxonomy" id="425011"/>
    <lineage>
        <taxon>Eukaryota</taxon>
        <taxon>Fungi</taxon>
        <taxon>Dikarya</taxon>
        <taxon>Ascomycota</taxon>
        <taxon>Pezizomycotina</taxon>
        <taxon>Eurotiomycetes</taxon>
        <taxon>Eurotiomycetidae</taxon>
        <taxon>Eurotiales</taxon>
        <taxon>Aspergillaceae</taxon>
        <taxon>Aspergillus</taxon>
        <taxon>Aspergillus subgen. Circumdati</taxon>
    </lineage>
</organism>
<gene>
    <name evidence="7" type="primary">ktnD</name>
    <name type="ORF">An04g09550</name>
</gene>
<sequence length="608" mass="68531">MPSNYTQHVGNHDFTRATVVIIGAGVSGMCMAIDLLHRTPIRKFVILEQGSSVGGTWANNLYPGCASDVCSSLYSYSFEQRPDWAAEYPGQEEFLTYMTDVAQKHGLYKYIRFNSTVQEARWDDKQQQWKVKVALNSAKASEFHEQYELTTNFLVSAVGQLNVPSYPSISGLDDYTGKLIHSARWDWTYDFSGKRIGVIGNGASAIQIVPELAKTASHITIYQRSPKWLLPRSNKKIGAIQHFLLSYVPPLRWCKRILQMRYREWLYNVLVTPGTVPARQFEAQSQEWMKSQLPDKPELWDTLTPNYAIGCKRVLISDDFYAALNASHVDLNTRPIQRITATGVQTDDDEQEYDLIVLATGFRASEFLHPIRVYGAGGRSLEDIWKDGPRAYYGMTVEDVPNFGMLYGPNTNLGHNSVITMIEAQSRYLSTMIRAVADAKKKDQTLVIQPRPEVLREYNERVQKHLAETSFADPNCQSWYKTDEGLITNNWPSTVVRYQKEVSQVRWADFILKGSGSAAVAKKKATYVGRVKEEALVSNVTLFLGVALAAGGVYWRATSWWKWEVPLIDKVGDDGILYGSGKTAWTSRVCPGAHCASGLLRILSLRRA</sequence>
<proteinExistence type="inferred from homology"/>
<feature type="chain" id="PRO_0000442171" description="FAD-binding monooxygenase ktnD">
    <location>
        <begin position="1"/>
        <end position="608"/>
    </location>
</feature>
<feature type="transmembrane region" description="Helical" evidence="2">
    <location>
        <begin position="17"/>
        <end position="37"/>
    </location>
</feature>
<feature type="transmembrane region" description="Helical" evidence="2">
    <location>
        <begin position="535"/>
        <end position="555"/>
    </location>
</feature>
<feature type="binding site" evidence="1">
    <location>
        <begin position="56"/>
        <end position="59"/>
    </location>
    <ligand>
        <name>FAD</name>
        <dbReference type="ChEBI" id="CHEBI:57692"/>
    </ligand>
</feature>
<feature type="binding site" evidence="1">
    <location>
        <begin position="66"/>
        <end position="68"/>
    </location>
    <ligand>
        <name>NADP(+)</name>
        <dbReference type="ChEBI" id="CHEBI:58349"/>
    </ligand>
</feature>
<feature type="binding site" evidence="1">
    <location>
        <begin position="68"/>
        <end position="69"/>
    </location>
    <ligand>
        <name>FAD</name>
        <dbReference type="ChEBI" id="CHEBI:57692"/>
    </ligand>
</feature>
<feature type="binding site" evidence="1">
    <location>
        <position position="74"/>
    </location>
    <ligand>
        <name>FAD</name>
        <dbReference type="ChEBI" id="CHEBI:57692"/>
    </ligand>
</feature>
<feature type="binding site" evidence="1">
    <location>
        <begin position="201"/>
        <end position="207"/>
    </location>
    <ligand>
        <name>NADP(+)</name>
        <dbReference type="ChEBI" id="CHEBI:58349"/>
    </ligand>
</feature>
<feature type="binding site" evidence="1">
    <location>
        <begin position="224"/>
        <end position="225"/>
    </location>
    <ligand>
        <name>NADP(+)</name>
        <dbReference type="ChEBI" id="CHEBI:58349"/>
    </ligand>
</feature>
<feature type="glycosylation site" description="N-linked (GlcNAc...) asparagine" evidence="3">
    <location>
        <position position="4"/>
    </location>
</feature>
<feature type="glycosylation site" description="N-linked (GlcNAc...) asparagine" evidence="3">
    <location>
        <position position="114"/>
    </location>
</feature>
<feature type="glycosylation site" description="N-linked (GlcNAc...) asparagine" evidence="3">
    <location>
        <position position="325"/>
    </location>
</feature>
<dbReference type="EC" id="1.14.13.-" evidence="8"/>
<dbReference type="EMBL" id="AM270096">
    <property type="protein sequence ID" value="CAK47962.1"/>
    <property type="molecule type" value="Genomic_DNA"/>
</dbReference>
<dbReference type="RefSeq" id="XP_001402311.2">
    <property type="nucleotide sequence ID" value="XM_001402274.2"/>
</dbReference>
<dbReference type="SMR" id="A2QK68"/>
<dbReference type="GlyCosmos" id="A2QK68">
    <property type="glycosylation" value="3 sites, No reported glycans"/>
</dbReference>
<dbReference type="EnsemblFungi" id="CAK47962">
    <property type="protein sequence ID" value="CAK47962"/>
    <property type="gene ID" value="An04g09550"/>
</dbReference>
<dbReference type="GeneID" id="4991358"/>
<dbReference type="KEGG" id="ang:An04g09550"/>
<dbReference type="VEuPathDB" id="FungiDB:An04g09550"/>
<dbReference type="HOGENOM" id="CLU_006937_7_1_1"/>
<dbReference type="Proteomes" id="UP000006706">
    <property type="component" value="Chromosome 6L"/>
</dbReference>
<dbReference type="GO" id="GO:0016020">
    <property type="term" value="C:membrane"/>
    <property type="evidence" value="ECO:0007669"/>
    <property type="project" value="UniProtKB-SubCell"/>
</dbReference>
<dbReference type="GO" id="GO:0050660">
    <property type="term" value="F:flavin adenine dinucleotide binding"/>
    <property type="evidence" value="ECO:0007669"/>
    <property type="project" value="InterPro"/>
</dbReference>
<dbReference type="GO" id="GO:0004499">
    <property type="term" value="F:N,N-dimethylaniline monooxygenase activity"/>
    <property type="evidence" value="ECO:0007669"/>
    <property type="project" value="InterPro"/>
</dbReference>
<dbReference type="GO" id="GO:0050661">
    <property type="term" value="F:NADP binding"/>
    <property type="evidence" value="ECO:0007669"/>
    <property type="project" value="InterPro"/>
</dbReference>
<dbReference type="Gene3D" id="3.50.50.60">
    <property type="entry name" value="FAD/NAD(P)-binding domain"/>
    <property type="match status" value="2"/>
</dbReference>
<dbReference type="InterPro" id="IPR051209">
    <property type="entry name" value="FAD-bind_Monooxygenase_sf"/>
</dbReference>
<dbReference type="InterPro" id="IPR036188">
    <property type="entry name" value="FAD/NAD-bd_sf"/>
</dbReference>
<dbReference type="InterPro" id="IPR020946">
    <property type="entry name" value="Flavin_mOase-like"/>
</dbReference>
<dbReference type="PANTHER" id="PTHR42877:SF4">
    <property type="entry name" value="FAD_NAD(P)-BINDING DOMAIN-CONTAINING PROTEIN-RELATED"/>
    <property type="match status" value="1"/>
</dbReference>
<dbReference type="PANTHER" id="PTHR42877">
    <property type="entry name" value="L-ORNITHINE N(5)-MONOOXYGENASE-RELATED"/>
    <property type="match status" value="1"/>
</dbReference>
<dbReference type="Pfam" id="PF00743">
    <property type="entry name" value="FMO-like"/>
    <property type="match status" value="1"/>
</dbReference>
<dbReference type="SUPFAM" id="SSF51905">
    <property type="entry name" value="FAD/NAD(P)-binding domain"/>
    <property type="match status" value="2"/>
</dbReference>
<name>KTND_ASPNC</name>
<keyword id="KW-0274">FAD</keyword>
<keyword id="KW-0285">Flavoprotein</keyword>
<keyword id="KW-0325">Glycoprotein</keyword>
<keyword id="KW-0472">Membrane</keyword>
<keyword id="KW-0521">NADP</keyword>
<keyword id="KW-0560">Oxidoreductase</keyword>
<keyword id="KW-1185">Reference proteome</keyword>
<keyword id="KW-0812">Transmembrane</keyword>
<keyword id="KW-1133">Transmembrane helix</keyword>
<reference key="1">
    <citation type="journal article" date="2007" name="Nat. Biotechnol.">
        <title>Genome sequencing and analysis of the versatile cell factory Aspergillus niger CBS 513.88.</title>
        <authorList>
            <person name="Pel H.J."/>
            <person name="de Winde J.H."/>
            <person name="Archer D.B."/>
            <person name="Dyer P.S."/>
            <person name="Hofmann G."/>
            <person name="Schaap P.J."/>
            <person name="Turner G."/>
            <person name="de Vries R.P."/>
            <person name="Albang R."/>
            <person name="Albermann K."/>
            <person name="Andersen M.R."/>
            <person name="Bendtsen J.D."/>
            <person name="Benen J.A.E."/>
            <person name="van den Berg M."/>
            <person name="Breestraat S."/>
            <person name="Caddick M.X."/>
            <person name="Contreras R."/>
            <person name="Cornell M."/>
            <person name="Coutinho P.M."/>
            <person name="Danchin E.G.J."/>
            <person name="Debets A.J.M."/>
            <person name="Dekker P."/>
            <person name="van Dijck P.W.M."/>
            <person name="van Dijk A."/>
            <person name="Dijkhuizen L."/>
            <person name="Driessen A.J.M."/>
            <person name="d'Enfert C."/>
            <person name="Geysens S."/>
            <person name="Goosen C."/>
            <person name="Groot G.S.P."/>
            <person name="de Groot P.W.J."/>
            <person name="Guillemette T."/>
            <person name="Henrissat B."/>
            <person name="Herweijer M."/>
            <person name="van den Hombergh J.P.T.W."/>
            <person name="van den Hondel C.A.M.J.J."/>
            <person name="van der Heijden R.T.J.M."/>
            <person name="van der Kaaij R.M."/>
            <person name="Klis F.M."/>
            <person name="Kools H.J."/>
            <person name="Kubicek C.P."/>
            <person name="van Kuyk P.A."/>
            <person name="Lauber J."/>
            <person name="Lu X."/>
            <person name="van der Maarel M.J.E.C."/>
            <person name="Meulenberg R."/>
            <person name="Menke H."/>
            <person name="Mortimer M.A."/>
            <person name="Nielsen J."/>
            <person name="Oliver S.G."/>
            <person name="Olsthoorn M."/>
            <person name="Pal K."/>
            <person name="van Peij N.N.M.E."/>
            <person name="Ram A.F.J."/>
            <person name="Rinas U."/>
            <person name="Roubos J.A."/>
            <person name="Sagt C.M.J."/>
            <person name="Schmoll M."/>
            <person name="Sun J."/>
            <person name="Ussery D."/>
            <person name="Varga J."/>
            <person name="Vervecken W."/>
            <person name="van de Vondervoort P.J.J."/>
            <person name="Wedler H."/>
            <person name="Woesten H.A.B."/>
            <person name="Zeng A.-P."/>
            <person name="van Ooyen A.J.J."/>
            <person name="Visser J."/>
            <person name="Stam H."/>
        </authorList>
    </citation>
    <scope>NUCLEOTIDE SEQUENCE [LARGE SCALE GENOMIC DNA]</scope>
    <source>
        <strain>ATCC MYA-4892 / CBS 513.88 / FGSC A1513</strain>
    </source>
</reference>
<reference key="2">
    <citation type="journal article" date="2007" name="ChemBioChem">
        <title>Regio- and stereoselective intermolecular oxidative phenol coupling in kotanin biosynthesis by Aspergillus niger.</title>
        <authorList>
            <person name="Huettel W."/>
            <person name="Mueller M."/>
        </authorList>
    </citation>
    <scope>FUNCTION</scope>
</reference>
<reference key="3">
    <citation type="journal article" date="2012" name="Angew. Chem. Int. Ed.">
        <title>Regio- and stereoselective oxidative phenol coupling in Aspergillus niger.</title>
        <authorList>
            <person name="Gil Girol C."/>
            <person name="Fisch K.M."/>
            <person name="Heinekamp T."/>
            <person name="Guenther S."/>
            <person name="Huettel W."/>
            <person name="Piel J."/>
            <person name="Brakhage A.A."/>
            <person name="Mueller M."/>
        </authorList>
    </citation>
    <scope>FUNCTION</scope>
</reference>
<reference key="4">
    <citation type="journal article" date="2015" name="J. Am. Chem. Soc.">
        <title>Cytochrome P450-catalyzed regio- and stereoselective phenol coupling of fungal natural products.</title>
        <authorList>
            <person name="Mazzaferro L.S."/>
            <person name="Huettel W."/>
            <person name="Fries A."/>
            <person name="Mueller M."/>
        </authorList>
    </citation>
    <scope>FUNCTION</scope>
</reference>
<accession>A2QK68</accession>